<keyword id="KW-0002">3D-structure</keyword>
<keyword id="KW-0123">Cardiotoxin</keyword>
<keyword id="KW-0204">Cytolysis</keyword>
<keyword id="KW-0903">Direct protein sequencing</keyword>
<keyword id="KW-1015">Disulfide bond</keyword>
<keyword id="KW-0354">Hemolysis</keyword>
<keyword id="KW-0382">Hypotensive agent</keyword>
<keyword id="KW-0964">Secreted</keyword>
<keyword id="KW-0800">Toxin</keyword>
<feature type="chain" id="PRO_0000420427" description="Three-finger hemachatoxin" evidence="2">
    <location>
        <begin position="1"/>
        <end position="61"/>
    </location>
</feature>
<feature type="disulfide bond" evidence="2 4">
    <location>
        <begin position="3"/>
        <end position="22"/>
    </location>
</feature>
<feature type="disulfide bond" evidence="2 4">
    <location>
        <begin position="15"/>
        <end position="39"/>
    </location>
</feature>
<feature type="disulfide bond" evidence="2 4">
    <location>
        <begin position="43"/>
        <end position="54"/>
    </location>
</feature>
<feature type="disulfide bond" evidence="2 4">
    <location>
        <begin position="55"/>
        <end position="60"/>
    </location>
</feature>
<feature type="strand" evidence="5">
    <location>
        <begin position="2"/>
        <end position="4"/>
    </location>
</feature>
<feature type="strand" evidence="5">
    <location>
        <begin position="6"/>
        <end position="10"/>
    </location>
</feature>
<feature type="strand" evidence="5">
    <location>
        <begin position="12"/>
        <end position="14"/>
    </location>
</feature>
<feature type="strand" evidence="5">
    <location>
        <begin position="21"/>
        <end position="27"/>
    </location>
</feature>
<feature type="strand" evidence="5">
    <location>
        <begin position="30"/>
        <end position="42"/>
    </location>
</feature>
<feature type="strand" evidence="5">
    <location>
        <begin position="48"/>
        <end position="55"/>
    </location>
</feature>
<sequence length="61" mass="6844">LKCHNKLVPFLSKTCPEGKNLCYKMTLMKMPKIPIKRGCTDACPKSSLLVKVVCCNKDKCN</sequence>
<organism>
    <name type="scientific">Hemachatus haemachatus</name>
    <name type="common">Rinkhals</name>
    <name type="synonym">Sepedon haemachatus</name>
    <dbReference type="NCBI Taxonomy" id="8626"/>
    <lineage>
        <taxon>Eukaryota</taxon>
        <taxon>Metazoa</taxon>
        <taxon>Chordata</taxon>
        <taxon>Craniata</taxon>
        <taxon>Vertebrata</taxon>
        <taxon>Euteleostomi</taxon>
        <taxon>Lepidosauria</taxon>
        <taxon>Squamata</taxon>
        <taxon>Bifurcata</taxon>
        <taxon>Unidentata</taxon>
        <taxon>Episquamata</taxon>
        <taxon>Toxicofera</taxon>
        <taxon>Serpentes</taxon>
        <taxon>Colubroidea</taxon>
        <taxon>Elapidae</taxon>
        <taxon>Elapinae</taxon>
        <taxon>Hemachatus</taxon>
    </lineage>
</organism>
<reference key="1">
    <citation type="journal article" date="2012" name="PLoS ONE">
        <title>Identification and structural characterization of a new three-finger toxin hemachatoxin from Hemachatus haemachatus venom.</title>
        <authorList>
            <person name="Girish V.M."/>
            <person name="Kumar S."/>
            <person name="Joseph L."/>
            <person name="Jobichen C."/>
            <person name="Kini R.M."/>
            <person name="Sivaraman J."/>
        </authorList>
    </citation>
    <scope>X-RAY CRYSTALLOGRAPHY (2.43 ANGSTROMS)</scope>
    <scope>PROTEIN SEQUENCE</scope>
    <scope>MASS SPECTROMETRY</scope>
    <scope>DISULFIDE BONDS</scope>
    <scope>SUBCELLULAR LOCATION</scope>
    <source>
        <tissue>Venom</tissue>
    </source>
</reference>
<proteinExistence type="evidence at protein level"/>
<protein>
    <recommendedName>
        <fullName>Three-finger hemachatoxin</fullName>
    </recommendedName>
</protein>
<evidence type="ECO:0000250" key="1">
    <source>
        <dbReference type="UniProtKB" id="P01471"/>
    </source>
</evidence>
<evidence type="ECO:0000269" key="2">
    <source>
    </source>
</evidence>
<evidence type="ECO:0000305" key="3"/>
<evidence type="ECO:0000312" key="4">
    <source>
        <dbReference type="PDB" id="3VTS"/>
    </source>
</evidence>
<evidence type="ECO:0007829" key="5">
    <source>
        <dbReference type="PDB" id="3VTS"/>
    </source>
</evidence>
<name>3SBH_HEMHA</name>
<accession>B3EWH9</accession>
<comment type="function">
    <text evidence="1">This protein lyses red blood cells and has cardiotoxic and hypotensive activities.</text>
</comment>
<comment type="subcellular location">
    <subcellularLocation>
        <location evidence="2">Secreted</location>
    </subcellularLocation>
</comment>
<comment type="tissue specificity">
    <text evidence="3">Expressed by the venom gland.</text>
</comment>
<comment type="mass spectrometry" mass="6835.68" error="0.94" method="Electrospray" evidence="2"/>
<comment type="miscellaneous">
    <text evidence="3">Is classified as a P-type cytotoxin, since a proline residue stands at position 31 (Pro-31 in standard classification).</text>
</comment>
<comment type="similarity">
    <text evidence="3">Belongs to the three-finger toxin family. Short-chain subfamily. Type IB cytotoxin sub-subfamily.</text>
</comment>
<dbReference type="PDB" id="3VTS">
    <property type="method" value="X-ray"/>
    <property type="resolution" value="2.43 A"/>
    <property type="chains" value="A/B=1-61"/>
</dbReference>
<dbReference type="PDBsum" id="3VTS"/>
<dbReference type="SMR" id="B3EWH9"/>
<dbReference type="EvolutionaryTrace" id="B3EWH9"/>
<dbReference type="GO" id="GO:0005576">
    <property type="term" value="C:extracellular region"/>
    <property type="evidence" value="ECO:0000314"/>
    <property type="project" value="UniProtKB"/>
</dbReference>
<dbReference type="GO" id="GO:0090729">
    <property type="term" value="F:toxin activity"/>
    <property type="evidence" value="ECO:0007669"/>
    <property type="project" value="UniProtKB-KW"/>
</dbReference>
<dbReference type="GO" id="GO:0031640">
    <property type="term" value="P:killing of cells of another organism"/>
    <property type="evidence" value="ECO:0007669"/>
    <property type="project" value="UniProtKB-KW"/>
</dbReference>
<dbReference type="GO" id="GO:0008217">
    <property type="term" value="P:regulation of blood pressure"/>
    <property type="evidence" value="ECO:0007669"/>
    <property type="project" value="UniProtKB-KW"/>
</dbReference>
<dbReference type="CDD" id="cd00206">
    <property type="entry name" value="TFP_snake_toxin"/>
    <property type="match status" value="1"/>
</dbReference>
<dbReference type="FunFam" id="2.10.60.10:FF:000024">
    <property type="entry name" value="Cytotoxin 1"/>
    <property type="match status" value="1"/>
</dbReference>
<dbReference type="Gene3D" id="2.10.60.10">
    <property type="entry name" value="CD59"/>
    <property type="match status" value="1"/>
</dbReference>
<dbReference type="InterPro" id="IPR003572">
    <property type="entry name" value="Cytotoxin_Cobra"/>
</dbReference>
<dbReference type="InterPro" id="IPR003571">
    <property type="entry name" value="Snake_3FTx"/>
</dbReference>
<dbReference type="InterPro" id="IPR045860">
    <property type="entry name" value="Snake_toxin-like_sf"/>
</dbReference>
<dbReference type="InterPro" id="IPR018354">
    <property type="entry name" value="Snake_toxin_con_site"/>
</dbReference>
<dbReference type="InterPro" id="IPR054131">
    <property type="entry name" value="Toxin_cobra-type"/>
</dbReference>
<dbReference type="Pfam" id="PF21947">
    <property type="entry name" value="Toxin_cobra-type"/>
    <property type="match status" value="1"/>
</dbReference>
<dbReference type="PRINTS" id="PR00282">
    <property type="entry name" value="CYTOTOXIN"/>
</dbReference>
<dbReference type="SUPFAM" id="SSF57302">
    <property type="entry name" value="Snake toxin-like"/>
    <property type="match status" value="1"/>
</dbReference>
<dbReference type="PROSITE" id="PS00272">
    <property type="entry name" value="SNAKE_TOXIN"/>
    <property type="match status" value="1"/>
</dbReference>